<feature type="chain" id="PRO_0000205349" description="Uncharacterized protein SCO4036">
    <location>
        <begin position="1"/>
        <end position="97"/>
    </location>
</feature>
<feature type="domain" description="Stress-response A/B barrel" evidence="1">
    <location>
        <begin position="2"/>
        <end position="95"/>
    </location>
</feature>
<keyword id="KW-1185">Reference proteome</keyword>
<dbReference type="EMBL" id="L11648">
    <property type="protein sequence ID" value="AAA93051.1"/>
    <property type="molecule type" value="Genomic_DNA"/>
</dbReference>
<dbReference type="EMBL" id="AL939118">
    <property type="protein sequence ID" value="CAC32307.1"/>
    <property type="molecule type" value="Genomic_DNA"/>
</dbReference>
<dbReference type="PIR" id="S69775">
    <property type="entry name" value="S69775"/>
</dbReference>
<dbReference type="RefSeq" id="NP_628218.1">
    <property type="nucleotide sequence ID" value="NC_003888.3"/>
</dbReference>
<dbReference type="RefSeq" id="WP_003974926.1">
    <property type="nucleotide sequence ID" value="NZ_VNID01000032.1"/>
</dbReference>
<dbReference type="SMR" id="P37977"/>
<dbReference type="STRING" id="100226.gene:17761666"/>
<dbReference type="PaxDb" id="100226-SCO4036"/>
<dbReference type="KEGG" id="sco:SCO4036"/>
<dbReference type="PATRIC" id="fig|100226.15.peg.4099"/>
<dbReference type="eggNOG" id="ENOG5033H6W">
    <property type="taxonomic scope" value="Bacteria"/>
</dbReference>
<dbReference type="HOGENOM" id="CLU_080664_8_0_11"/>
<dbReference type="InParanoid" id="P37977"/>
<dbReference type="OrthoDB" id="6637496at2"/>
<dbReference type="Proteomes" id="UP000001973">
    <property type="component" value="Chromosome"/>
</dbReference>
<dbReference type="Gene3D" id="3.30.70.100">
    <property type="match status" value="1"/>
</dbReference>
<dbReference type="InterPro" id="IPR013097">
    <property type="entry name" value="Dabb"/>
</dbReference>
<dbReference type="InterPro" id="IPR011008">
    <property type="entry name" value="Dimeric_a/b-barrel"/>
</dbReference>
<dbReference type="PANTHER" id="PTHR37832">
    <property type="entry name" value="BLL2683 PROTEIN"/>
    <property type="match status" value="1"/>
</dbReference>
<dbReference type="PANTHER" id="PTHR37832:SF1">
    <property type="entry name" value="STRESS-RESPONSE A_B BARREL DOMAIN-CONTAINING PROTEIN"/>
    <property type="match status" value="1"/>
</dbReference>
<dbReference type="Pfam" id="PF07876">
    <property type="entry name" value="Dabb"/>
    <property type="match status" value="1"/>
</dbReference>
<dbReference type="SMART" id="SM00886">
    <property type="entry name" value="Dabb"/>
    <property type="match status" value="1"/>
</dbReference>
<dbReference type="SUPFAM" id="SSF54909">
    <property type="entry name" value="Dimeric alpha+beta barrel"/>
    <property type="match status" value="1"/>
</dbReference>
<dbReference type="PROSITE" id="PS51502">
    <property type="entry name" value="S_R_A_B_BARREL"/>
    <property type="match status" value="1"/>
</dbReference>
<protein>
    <recommendedName>
        <fullName>Uncharacterized protein SCO4036</fullName>
    </recommendedName>
</protein>
<reference key="1">
    <citation type="journal article" date="1995" name="Mol. Microbiol.">
        <title>A new RNA polymerase sigma factor, sigma F, is required for the late stages of morphological differentiation in Streptomyces spp.</title>
        <authorList>
            <person name="Potuckova L."/>
            <person name="Kelemen G.H."/>
            <person name="Findlay K.C."/>
            <person name="Lonetto M.A."/>
            <person name="Buttner M.J."/>
            <person name="Kormanec J."/>
        </authorList>
    </citation>
    <scope>NUCLEOTIDE SEQUENCE [GENOMIC DNA]</scope>
</reference>
<reference key="2">
    <citation type="journal article" date="2002" name="Nature">
        <title>Complete genome sequence of the model actinomycete Streptomyces coelicolor A3(2).</title>
        <authorList>
            <person name="Bentley S.D."/>
            <person name="Chater K.F."/>
            <person name="Cerdeno-Tarraga A.-M."/>
            <person name="Challis G.L."/>
            <person name="Thomson N.R."/>
            <person name="James K.D."/>
            <person name="Harris D.E."/>
            <person name="Quail M.A."/>
            <person name="Kieser H."/>
            <person name="Harper D."/>
            <person name="Bateman A."/>
            <person name="Brown S."/>
            <person name="Chandra G."/>
            <person name="Chen C.W."/>
            <person name="Collins M."/>
            <person name="Cronin A."/>
            <person name="Fraser A."/>
            <person name="Goble A."/>
            <person name="Hidalgo J."/>
            <person name="Hornsby T."/>
            <person name="Howarth S."/>
            <person name="Huang C.-H."/>
            <person name="Kieser T."/>
            <person name="Larke L."/>
            <person name="Murphy L.D."/>
            <person name="Oliver K."/>
            <person name="O'Neil S."/>
            <person name="Rabbinowitsch E."/>
            <person name="Rajandream M.A."/>
            <person name="Rutherford K.M."/>
            <person name="Rutter S."/>
            <person name="Seeger K."/>
            <person name="Saunders D."/>
            <person name="Sharp S."/>
            <person name="Squares R."/>
            <person name="Squares S."/>
            <person name="Taylor K."/>
            <person name="Warren T."/>
            <person name="Wietzorrek A."/>
            <person name="Woodward J.R."/>
            <person name="Barrell B.G."/>
            <person name="Parkhill J."/>
            <person name="Hopwood D.A."/>
        </authorList>
    </citation>
    <scope>NUCLEOTIDE SEQUENCE [LARGE SCALE GENOMIC DNA]</scope>
    <source>
        <strain>ATCC BAA-471 / A3(2) / M145</strain>
    </source>
</reference>
<evidence type="ECO:0000255" key="1">
    <source>
        <dbReference type="PROSITE-ProRule" id="PRU00835"/>
    </source>
</evidence>
<accession>P37977</accession>
<name>Y4036_STRCO</name>
<organism>
    <name type="scientific">Streptomyces coelicolor (strain ATCC BAA-471 / A3(2) / M145)</name>
    <dbReference type="NCBI Taxonomy" id="100226"/>
    <lineage>
        <taxon>Bacteria</taxon>
        <taxon>Bacillati</taxon>
        <taxon>Actinomycetota</taxon>
        <taxon>Actinomycetes</taxon>
        <taxon>Kitasatosporales</taxon>
        <taxon>Streptomycetaceae</taxon>
        <taxon>Streptomyces</taxon>
        <taxon>Streptomyces albidoflavus group</taxon>
    </lineage>
</organism>
<gene>
    <name type="ordered locus">SCO4036</name>
    <name type="ORF">2SCD60.02c</name>
</gene>
<sequence length="97" mass="11121">MIRHLVLFKLNDGVGRDEPRVLAGVEAFRALGGQIEDLRFWECAWNISDRPIAYDFAINSAVDDADALKRYLEHPAHQAGVALWREFATWVIADYEF</sequence>
<proteinExistence type="predicted"/>